<name>ASQJ_EMENI</name>
<organism>
    <name type="scientific">Emericella nidulans (strain FGSC A4 / ATCC 38163 / CBS 112.46 / NRRL 194 / M139)</name>
    <name type="common">Aspergillus nidulans</name>
    <dbReference type="NCBI Taxonomy" id="227321"/>
    <lineage>
        <taxon>Eukaryota</taxon>
        <taxon>Fungi</taxon>
        <taxon>Dikarya</taxon>
        <taxon>Ascomycota</taxon>
        <taxon>Pezizomycotina</taxon>
        <taxon>Eurotiomycetes</taxon>
        <taxon>Eurotiomycetidae</taxon>
        <taxon>Eurotiales</taxon>
        <taxon>Aspergillaceae</taxon>
        <taxon>Aspergillus</taxon>
        <taxon>Aspergillus subgen. Nidulantes</taxon>
    </lineage>
</organism>
<protein>
    <recommendedName>
        <fullName evidence="5">Iron/alpha-ketoglutarate-dependent dioxygenase asqJ</fullName>
        <ecNumber evidence="3 4">1.14.11.81</ecNumber>
    </recommendedName>
    <alternativeName>
        <fullName evidence="6">(-)-cyclopenine synthase</fullName>
    </alternativeName>
    <alternativeName>
        <fullName evidence="6">4'-methoxyviridicatin/aspoquinolone biosynthesis cluster protein asqJ</fullName>
    </alternativeName>
    <alternativeName>
        <fullName evidence="5">Aspoquinolone biosynthesis protein J</fullName>
    </alternativeName>
</protein>
<sequence>MGYPKAFTSSDSEPEPDLSRDLGNPVMGNPGVVSRSSSTVAQHSVRNNPTGPDGRLAGLWNARALLRFPAEVNGVRLDFKSVSSRRPTSRLSLLPYSLCSICPSSQATMTSKDHVKSQIPRLSAINDLHKIWPTVEEHGAAIIESFLSLDIVRRLNEEVDPFVKIEPIPAAKTKDHPNHVLSTTTRLVNVLAPISKAYREDVLNSKVLHRICSDAFHVYGDYWVLMGAVMELAPSNPAQPLHRDMRFSHPIVEYLKPDAPATSINFLVALSPFTAENGATHVILGSHKWQNLSNVSMDATVRALMNPGDALLITDSTIHCGGAETTGTETRRLLTITMGISQLTPLESNLAVPRPVIESLTPLAQRLLGWASQRSAAPRDIGLLTIRGNSIEKTMNLKAEQPLHDDEAEPLCRETI</sequence>
<reference key="1">
    <citation type="journal article" date="2005" name="Nature">
        <title>Sequencing of Aspergillus nidulans and comparative analysis with A. fumigatus and A. oryzae.</title>
        <authorList>
            <person name="Galagan J.E."/>
            <person name="Calvo S.E."/>
            <person name="Cuomo C."/>
            <person name="Ma L.-J."/>
            <person name="Wortman J.R."/>
            <person name="Batzoglou S."/>
            <person name="Lee S.-I."/>
            <person name="Bastuerkmen M."/>
            <person name="Spevak C.C."/>
            <person name="Clutterbuck J."/>
            <person name="Kapitonov V."/>
            <person name="Jurka J."/>
            <person name="Scazzocchio C."/>
            <person name="Farman M.L."/>
            <person name="Butler J."/>
            <person name="Purcell S."/>
            <person name="Harris S."/>
            <person name="Braus G.H."/>
            <person name="Draht O."/>
            <person name="Busch S."/>
            <person name="D'Enfert C."/>
            <person name="Bouchier C."/>
            <person name="Goldman G.H."/>
            <person name="Bell-Pedersen D."/>
            <person name="Griffiths-Jones S."/>
            <person name="Doonan J.H."/>
            <person name="Yu J."/>
            <person name="Vienken K."/>
            <person name="Pain A."/>
            <person name="Freitag M."/>
            <person name="Selker E.U."/>
            <person name="Archer D.B."/>
            <person name="Penalva M.A."/>
            <person name="Oakley B.R."/>
            <person name="Momany M."/>
            <person name="Tanaka T."/>
            <person name="Kumagai T."/>
            <person name="Asai K."/>
            <person name="Machida M."/>
            <person name="Nierman W.C."/>
            <person name="Denning D.W."/>
            <person name="Caddick M.X."/>
            <person name="Hynes M."/>
            <person name="Paoletti M."/>
            <person name="Fischer R."/>
            <person name="Miller B.L."/>
            <person name="Dyer P.S."/>
            <person name="Sachs M.S."/>
            <person name="Osmani S.A."/>
            <person name="Birren B.W."/>
        </authorList>
    </citation>
    <scope>NUCLEOTIDE SEQUENCE [LARGE SCALE GENOMIC DNA]</scope>
    <source>
        <strain>FGSC A4 / ATCC 38163 / CBS 112.46 / NRRL 194 / M139</strain>
    </source>
</reference>
<reference key="2">
    <citation type="journal article" date="2009" name="Fungal Genet. Biol.">
        <title>The 2008 update of the Aspergillus nidulans genome annotation: a community effort.</title>
        <authorList>
            <person name="Wortman J.R."/>
            <person name="Gilsenan J.M."/>
            <person name="Joardar V."/>
            <person name="Deegan J."/>
            <person name="Clutterbuck J."/>
            <person name="Andersen M.R."/>
            <person name="Archer D."/>
            <person name="Bencina M."/>
            <person name="Braus G."/>
            <person name="Coutinho P."/>
            <person name="von Dohren H."/>
            <person name="Doonan J."/>
            <person name="Driessen A.J."/>
            <person name="Durek P."/>
            <person name="Espeso E."/>
            <person name="Fekete E."/>
            <person name="Flipphi M."/>
            <person name="Estrada C.G."/>
            <person name="Geysens S."/>
            <person name="Goldman G."/>
            <person name="de Groot P.W."/>
            <person name="Hansen K."/>
            <person name="Harris S.D."/>
            <person name="Heinekamp T."/>
            <person name="Helmstaedt K."/>
            <person name="Henrissat B."/>
            <person name="Hofmann G."/>
            <person name="Homan T."/>
            <person name="Horio T."/>
            <person name="Horiuchi H."/>
            <person name="James S."/>
            <person name="Jones M."/>
            <person name="Karaffa L."/>
            <person name="Karanyi Z."/>
            <person name="Kato M."/>
            <person name="Keller N."/>
            <person name="Kelly D.E."/>
            <person name="Kiel J.A."/>
            <person name="Kim J.M."/>
            <person name="van der Klei I.J."/>
            <person name="Klis F.M."/>
            <person name="Kovalchuk A."/>
            <person name="Krasevec N."/>
            <person name="Kubicek C.P."/>
            <person name="Liu B."/>
            <person name="Maccabe A."/>
            <person name="Meyer V."/>
            <person name="Mirabito P."/>
            <person name="Miskei M."/>
            <person name="Mos M."/>
            <person name="Mullins J."/>
            <person name="Nelson D.R."/>
            <person name="Nielsen J."/>
            <person name="Oakley B.R."/>
            <person name="Osmani S.A."/>
            <person name="Pakula T."/>
            <person name="Paszewski A."/>
            <person name="Paulsen I."/>
            <person name="Pilsyk S."/>
            <person name="Pocsi I."/>
            <person name="Punt P.J."/>
            <person name="Ram A.F."/>
            <person name="Ren Q."/>
            <person name="Robellet X."/>
            <person name="Robson G."/>
            <person name="Seiboth B."/>
            <person name="van Solingen P."/>
            <person name="Specht T."/>
            <person name="Sun J."/>
            <person name="Taheri-Talesh N."/>
            <person name="Takeshita N."/>
            <person name="Ussery D."/>
            <person name="vanKuyk P.A."/>
            <person name="Visser H."/>
            <person name="van de Vondervoort P.J."/>
            <person name="de Vries R.P."/>
            <person name="Walton J."/>
            <person name="Xiang X."/>
            <person name="Xiong Y."/>
            <person name="Zeng A.P."/>
            <person name="Brandt B.W."/>
            <person name="Cornell M.J."/>
            <person name="van den Hondel C.A."/>
            <person name="Visser J."/>
            <person name="Oliver S.G."/>
            <person name="Turner G."/>
        </authorList>
    </citation>
    <scope>GENOME REANNOTATION</scope>
    <source>
        <strain>FGSC A4 / ATCC 38163 / CBS 112.46 / NRRL 194 / M139</strain>
    </source>
</reference>
<reference key="3">
    <citation type="journal article" date="2014" name="Angew. Chem. Int. Ed.">
        <title>Non-heme dioxygenase catalyzes atypical oxidations of 6,7-bicyclic systems to form the 6,6-quinolone core of viridicatin-type fungal alkaloids.</title>
        <authorList>
            <person name="Ishikawa N."/>
            <person name="Tanaka H."/>
            <person name="Koyama F."/>
            <person name="Noguchi H."/>
            <person name="Wang C.C."/>
            <person name="Hotta K."/>
            <person name="Watanabe K."/>
        </authorList>
    </citation>
    <scope>FUNCTION</scope>
    <scope>CATALYTIC ACTIVITY</scope>
    <scope>PATHWAY</scope>
</reference>
<reference key="4">
    <citation type="journal article" date="2016" name="Angew. Chem. Int. Ed.">
        <title>Structure of the dioxygenase AsqJ: mechanistic insights into a one-pot multistep quinolone antibiotic biosynthesis.</title>
        <authorList>
            <person name="Brauer A."/>
            <person name="Beck P."/>
            <person name="Hintermann L."/>
            <person name="Groll M."/>
        </authorList>
    </citation>
    <scope>X-RAY CRYSTALLOGRAPHY (1.60 ANGSTROMS) OF 110-416</scope>
    <scope>FUNCTION</scope>
    <scope>CATALYTIC ACTIVITY</scope>
    <scope>COFACTOR</scope>
    <scope>PATHWAY</scope>
</reference>
<accession>Q5AR53</accession>
<accession>C8VJQ4</accession>
<evidence type="ECO:0000250" key="1">
    <source>
        <dbReference type="UniProtKB" id="Q4WAW9"/>
    </source>
</evidence>
<evidence type="ECO:0000256" key="2">
    <source>
        <dbReference type="SAM" id="MobiDB-lite"/>
    </source>
</evidence>
<evidence type="ECO:0000269" key="3">
    <source>
    </source>
</evidence>
<evidence type="ECO:0000269" key="4">
    <source>
    </source>
</evidence>
<evidence type="ECO:0000303" key="5">
    <source>
    </source>
</evidence>
<evidence type="ECO:0000305" key="6"/>
<evidence type="ECO:0007829" key="7">
    <source>
        <dbReference type="PDB" id="7OLR"/>
    </source>
</evidence>
<evidence type="ECO:0007829" key="8">
    <source>
        <dbReference type="PDB" id="7OLT"/>
    </source>
</evidence>
<dbReference type="EC" id="1.14.11.81" evidence="3 4"/>
<dbReference type="EMBL" id="BN001306">
    <property type="protein sequence ID" value="CBF82281.1"/>
    <property type="molecule type" value="Genomic_DNA"/>
</dbReference>
<dbReference type="EMBL" id="AACD01000170">
    <property type="protein sequence ID" value="EAA61518.1"/>
    <property type="molecule type" value="Genomic_DNA"/>
</dbReference>
<dbReference type="RefSeq" id="XP_682496.1">
    <property type="nucleotide sequence ID" value="XM_677404.1"/>
</dbReference>
<dbReference type="PDB" id="5DAP">
    <property type="method" value="X-ray"/>
    <property type="resolution" value="1.70 A"/>
    <property type="chains" value="A=110-416"/>
</dbReference>
<dbReference type="PDB" id="5DAQ">
    <property type="method" value="X-ray"/>
    <property type="resolution" value="1.70 A"/>
    <property type="chains" value="A=110-416"/>
</dbReference>
<dbReference type="PDB" id="5DAV">
    <property type="method" value="X-ray"/>
    <property type="resolution" value="1.80 A"/>
    <property type="chains" value="A=110-416"/>
</dbReference>
<dbReference type="PDB" id="5DAW">
    <property type="method" value="X-ray"/>
    <property type="resolution" value="1.60 A"/>
    <property type="chains" value="A=110-416"/>
</dbReference>
<dbReference type="PDB" id="5DAX">
    <property type="method" value="X-ray"/>
    <property type="resolution" value="1.70 A"/>
    <property type="chains" value="A=110-416"/>
</dbReference>
<dbReference type="PDB" id="5OA4">
    <property type="method" value="X-ray"/>
    <property type="resolution" value="1.55 A"/>
    <property type="chains" value="A=110-416"/>
</dbReference>
<dbReference type="PDB" id="5OA7">
    <property type="method" value="X-ray"/>
    <property type="resolution" value="1.65 A"/>
    <property type="chains" value="A=110-416"/>
</dbReference>
<dbReference type="PDB" id="5OA8">
    <property type="method" value="X-ray"/>
    <property type="resolution" value="1.75 A"/>
    <property type="chains" value="A=110-416"/>
</dbReference>
<dbReference type="PDB" id="5Y7R">
    <property type="method" value="X-ray"/>
    <property type="resolution" value="1.96 A"/>
    <property type="chains" value="B=109-416"/>
</dbReference>
<dbReference type="PDB" id="5Y7T">
    <property type="method" value="X-ray"/>
    <property type="resolution" value="2.05 A"/>
    <property type="chains" value="B=109-416"/>
</dbReference>
<dbReference type="PDB" id="6EOZ">
    <property type="method" value="X-ray"/>
    <property type="resolution" value="1.55 A"/>
    <property type="chains" value="A=110-416"/>
</dbReference>
<dbReference type="PDB" id="6JZM">
    <property type="method" value="X-ray"/>
    <property type="resolution" value="1.88 A"/>
    <property type="chains" value="B=109-416"/>
</dbReference>
<dbReference type="PDB" id="6K0E">
    <property type="method" value="X-ray"/>
    <property type="resolution" value="1.71 A"/>
    <property type="chains" value="B=109-416"/>
</dbReference>
<dbReference type="PDB" id="6K0F">
    <property type="method" value="X-ray"/>
    <property type="resolution" value="1.63 A"/>
    <property type="chains" value="B=109-416"/>
</dbReference>
<dbReference type="PDB" id="6K30">
    <property type="method" value="X-ray"/>
    <property type="resolution" value="2.68 A"/>
    <property type="chains" value="B=109-416"/>
</dbReference>
<dbReference type="PDB" id="6KD9">
    <property type="method" value="X-ray"/>
    <property type="resolution" value="2.44 A"/>
    <property type="chains" value="B/F=109-416"/>
</dbReference>
<dbReference type="PDB" id="7OLK">
    <property type="method" value="X-ray"/>
    <property type="resolution" value="1.70 A"/>
    <property type="chains" value="A=110-416"/>
</dbReference>
<dbReference type="PDB" id="7OLL">
    <property type="method" value="X-ray"/>
    <property type="resolution" value="1.90 A"/>
    <property type="chains" value="A=110-416"/>
</dbReference>
<dbReference type="PDB" id="7OLM">
    <property type="method" value="X-ray"/>
    <property type="resolution" value="1.75 A"/>
    <property type="chains" value="A=110-416"/>
</dbReference>
<dbReference type="PDB" id="7OLO">
    <property type="method" value="X-ray"/>
    <property type="resolution" value="2.00 A"/>
    <property type="chains" value="A=110-416"/>
</dbReference>
<dbReference type="PDB" id="7OLP">
    <property type="method" value="X-ray"/>
    <property type="resolution" value="1.55 A"/>
    <property type="chains" value="A=110-416"/>
</dbReference>
<dbReference type="PDB" id="7OLQ">
    <property type="method" value="X-ray"/>
    <property type="resolution" value="2.05 A"/>
    <property type="chains" value="A=110-416"/>
</dbReference>
<dbReference type="PDB" id="7OLR">
    <property type="method" value="X-ray"/>
    <property type="resolution" value="2.10 A"/>
    <property type="chains" value="A=110-416"/>
</dbReference>
<dbReference type="PDB" id="7OLT">
    <property type="method" value="X-ray"/>
    <property type="resolution" value="1.50 A"/>
    <property type="chains" value="A=110-416"/>
</dbReference>
<dbReference type="PDBsum" id="5DAP"/>
<dbReference type="PDBsum" id="5DAQ"/>
<dbReference type="PDBsum" id="5DAV"/>
<dbReference type="PDBsum" id="5DAW"/>
<dbReference type="PDBsum" id="5DAX"/>
<dbReference type="PDBsum" id="5OA4"/>
<dbReference type="PDBsum" id="5OA7"/>
<dbReference type="PDBsum" id="5OA8"/>
<dbReference type="PDBsum" id="5Y7R"/>
<dbReference type="PDBsum" id="5Y7T"/>
<dbReference type="PDBsum" id="6EOZ"/>
<dbReference type="PDBsum" id="6JZM"/>
<dbReference type="PDBsum" id="6K0E"/>
<dbReference type="PDBsum" id="6K0F"/>
<dbReference type="PDBsum" id="6K30"/>
<dbReference type="PDBsum" id="6KD9"/>
<dbReference type="PDBsum" id="7OLK"/>
<dbReference type="PDBsum" id="7OLL"/>
<dbReference type="PDBsum" id="7OLM"/>
<dbReference type="PDBsum" id="7OLO"/>
<dbReference type="PDBsum" id="7OLP"/>
<dbReference type="PDBsum" id="7OLQ"/>
<dbReference type="PDBsum" id="7OLR"/>
<dbReference type="PDBsum" id="7OLT"/>
<dbReference type="SMR" id="Q5AR53"/>
<dbReference type="STRING" id="227321.Q5AR53"/>
<dbReference type="EnsemblFungi" id="CBF82281">
    <property type="protein sequence ID" value="CBF82281"/>
    <property type="gene ID" value="ANIA_09227"/>
</dbReference>
<dbReference type="KEGG" id="ani:ANIA_09227"/>
<dbReference type="eggNOG" id="ENOG502S7ZW">
    <property type="taxonomic scope" value="Eukaryota"/>
</dbReference>
<dbReference type="HOGENOM" id="CLU_047725_1_0_1"/>
<dbReference type="InParanoid" id="Q5AR53"/>
<dbReference type="OMA" id="ADKYPPH"/>
<dbReference type="OrthoDB" id="445007at2759"/>
<dbReference type="EvolutionaryTrace" id="Q5AR53"/>
<dbReference type="Proteomes" id="UP000000560">
    <property type="component" value="Chromosome VI"/>
</dbReference>
<dbReference type="GO" id="GO:0051213">
    <property type="term" value="F:dioxygenase activity"/>
    <property type="evidence" value="ECO:0007669"/>
    <property type="project" value="UniProtKB-KW"/>
</dbReference>
<dbReference type="GO" id="GO:0046872">
    <property type="term" value="F:metal ion binding"/>
    <property type="evidence" value="ECO:0007669"/>
    <property type="project" value="UniProtKB-KW"/>
</dbReference>
<dbReference type="GO" id="GO:0009058">
    <property type="term" value="P:biosynthetic process"/>
    <property type="evidence" value="ECO:0007669"/>
    <property type="project" value="UniProtKB-ARBA"/>
</dbReference>
<dbReference type="Gene3D" id="2.60.120.620">
    <property type="entry name" value="q2cbj1_9rhob like domain"/>
    <property type="match status" value="1"/>
</dbReference>
<dbReference type="InterPro" id="IPR008775">
    <property type="entry name" value="Phytyl_CoA_dOase-like"/>
</dbReference>
<dbReference type="PANTHER" id="PTHR20883:SF41">
    <property type="entry name" value="IRON_ALPHA-KETOGLUTARATE-DEPENDENT DIOXYGENASE ASQJ"/>
    <property type="match status" value="1"/>
</dbReference>
<dbReference type="PANTHER" id="PTHR20883">
    <property type="entry name" value="PHYTANOYL-COA DIOXYGENASE DOMAIN CONTAINING 1"/>
    <property type="match status" value="1"/>
</dbReference>
<dbReference type="Pfam" id="PF05721">
    <property type="entry name" value="PhyH"/>
    <property type="match status" value="1"/>
</dbReference>
<dbReference type="SUPFAM" id="SSF51197">
    <property type="entry name" value="Clavaminate synthase-like"/>
    <property type="match status" value="1"/>
</dbReference>
<gene>
    <name evidence="5" type="primary">asqJ</name>
    <name type="ORF">AN9227</name>
</gene>
<feature type="chain" id="PRO_0000437624" description="Iron/alpha-ketoglutarate-dependent dioxygenase asqJ">
    <location>
        <begin position="1"/>
        <end position="416"/>
    </location>
</feature>
<feature type="region of interest" description="Disordered" evidence="2">
    <location>
        <begin position="1"/>
        <end position="53"/>
    </location>
</feature>
<feature type="compositionally biased region" description="Polar residues" evidence="2">
    <location>
        <begin position="34"/>
        <end position="50"/>
    </location>
</feature>
<feature type="binding site" evidence="4">
    <location>
        <position position="242"/>
    </location>
    <ligand>
        <name>Fe cation</name>
        <dbReference type="ChEBI" id="CHEBI:24875"/>
    </ligand>
</feature>
<feature type="binding site" evidence="4">
    <location>
        <position position="244"/>
    </location>
    <ligand>
        <name>Fe cation</name>
        <dbReference type="ChEBI" id="CHEBI:24875"/>
    </ligand>
</feature>
<feature type="binding site" evidence="4">
    <location>
        <position position="319"/>
    </location>
    <ligand>
        <name>Fe cation</name>
        <dbReference type="ChEBI" id="CHEBI:24875"/>
    </ligand>
</feature>
<feature type="strand" evidence="8">
    <location>
        <begin position="121"/>
        <end position="123"/>
    </location>
</feature>
<feature type="turn" evidence="8">
    <location>
        <begin position="124"/>
        <end position="126"/>
    </location>
</feature>
<feature type="helix" evidence="8">
    <location>
        <begin position="128"/>
        <end position="130"/>
    </location>
</feature>
<feature type="helix" evidence="8">
    <location>
        <begin position="131"/>
        <end position="138"/>
    </location>
</feature>
<feature type="strand" evidence="8">
    <location>
        <begin position="139"/>
        <end position="144"/>
    </location>
</feature>
<feature type="helix" evidence="8">
    <location>
        <begin position="149"/>
        <end position="165"/>
    </location>
</feature>
<feature type="strand" evidence="8">
    <location>
        <begin position="179"/>
        <end position="181"/>
    </location>
</feature>
<feature type="strand" evidence="8">
    <location>
        <begin position="186"/>
        <end position="188"/>
    </location>
</feature>
<feature type="turn" evidence="8">
    <location>
        <begin position="192"/>
        <end position="194"/>
    </location>
</feature>
<feature type="helix" evidence="8">
    <location>
        <begin position="196"/>
        <end position="200"/>
    </location>
</feature>
<feature type="turn" evidence="8">
    <location>
        <begin position="201"/>
        <end position="204"/>
    </location>
</feature>
<feature type="helix" evidence="8">
    <location>
        <begin position="206"/>
        <end position="216"/>
    </location>
</feature>
<feature type="turn" evidence="8">
    <location>
        <begin position="217"/>
        <end position="219"/>
    </location>
</feature>
<feature type="strand" evidence="8">
    <location>
        <begin position="222"/>
        <end position="232"/>
    </location>
</feature>
<feature type="turn" evidence="8">
    <location>
        <begin position="244"/>
        <end position="248"/>
    </location>
</feature>
<feature type="helix" evidence="8">
    <location>
        <begin position="250"/>
        <end position="254"/>
    </location>
</feature>
<feature type="strand" evidence="8">
    <location>
        <begin position="262"/>
        <end position="271"/>
    </location>
</feature>
<feature type="turn" evidence="8">
    <location>
        <begin position="275"/>
        <end position="278"/>
    </location>
</feature>
<feature type="helix" evidence="8">
    <location>
        <begin position="286"/>
        <end position="288"/>
    </location>
</feature>
<feature type="helix" evidence="8">
    <location>
        <begin position="297"/>
        <end position="299"/>
    </location>
</feature>
<feature type="strand" evidence="8">
    <location>
        <begin position="310"/>
        <end position="314"/>
    </location>
</feature>
<feature type="strand" evidence="8">
    <location>
        <begin position="326"/>
        <end position="328"/>
    </location>
</feature>
<feature type="strand" evidence="8">
    <location>
        <begin position="331"/>
        <end position="340"/>
    </location>
</feature>
<feature type="helix" evidence="8">
    <location>
        <begin position="354"/>
        <end position="358"/>
    </location>
</feature>
<feature type="helix" evidence="8">
    <location>
        <begin position="362"/>
        <end position="367"/>
    </location>
</feature>
<feature type="strand" evidence="8">
    <location>
        <begin position="375"/>
        <end position="377"/>
    </location>
</feature>
<feature type="strand" evidence="7">
    <location>
        <begin position="383"/>
        <end position="386"/>
    </location>
</feature>
<feature type="helix" evidence="8">
    <location>
        <begin position="391"/>
        <end position="395"/>
    </location>
</feature>
<proteinExistence type="evidence at protein level"/>
<keyword id="KW-0002">3D-structure</keyword>
<keyword id="KW-0223">Dioxygenase</keyword>
<keyword id="KW-0408">Iron</keyword>
<keyword id="KW-0479">Metal-binding</keyword>
<keyword id="KW-0560">Oxidoreductase</keyword>
<keyword id="KW-1185">Reference proteome</keyword>
<comment type="function">
    <text evidence="3 4 6">Iron/alpha-ketoglutarate-dependent dioxygenase; part of the gene cluster that mediates the biosynthesis of the aspoquinolone mycotoxins (PubMed:25251934, PubMed:26553478). Within the pathway, the iron/alpha-ketoglutarate-dependent dioxygenase asqJ acts as a (-)-cyclopenine synthase that converts 4'-methoxycyclopeptin into 4'-methoxydehydrocyclopeptin through dehydrogenation to form a double bond between C-alpha and C-beta of the O-methyltyrosine side chain (PubMed:25251934, PubMed:26553478). AsqJ is a very unique dioxygenase which is capable of catalyzing radical-mediated dehydrogenation and epoxidation reactions sequentially on a 6,7-benzo-diazepinedione substrate in the 4'-methoxyviridicatin biosynthetic pathway (PubMed:25251934). AsqJ is also capable of converting cyclopeptin into dehydrocyclopeptin (PubMed:25251934). The first step of the pathway is catalyzed by the nonribosomal peptide synthetase asqK that condenses anthranilic acid and O-methyl-L-tyrosine to produce 4'-methoxycyclopeptin. 4'-methoxycyclopeptin is then converted to 4'-methoxydehydrocyclopeptin by the ketoglutarate-dependent dioxygenase asqJ. AsqJ also converts its first product 4'-methoxydehydrocyclopeptin to 4'-methoxycyclopenin. The following conversion of 4'-methoxycyclopenin into 4'-methoxyviridicatin is catalyzed by the cyclopenase asqI. 4'-methoxyviridicatin is the precursor of quinolone natural products, and is further converted to quinolinone B. The prenyltransferase asqH1 then catalyzes the canonical Friedel-Crafts alkylation of quinolinone B with dimethylallyl cation to yield dimethylallyl quinolone, which is subjected to FAD-dependent dehydrogenation by the FAD-linked oxidoreductase asqF to yield conjugated aryl diene. The delta(3') double bond then serves as the site of the second alkylation with DMAPP catalyzed by the prenyltransferase asqH2 to yield a carbenium ion intermediate, which can be attacked by H(2)O to yield a styrenyl quinolone containing a C3'-hydroxyprenyl chain. The FAD-dependent monooxygenase asqG performs epoxidation of the terminal C7'-C8' olefin. Finally, after dehydratation of the epoxide at C3 by asqC, the quinolone epoxide rearrangement protein asqO catalyzes an enzymatic 3-exo-tet cyclization to yield the cyclopropyl-THF ring system in aspoquinolone (Probable).</text>
</comment>
<comment type="catalytic activity">
    <reaction evidence="3 4">
        <text>(-)-4'-methoxycyclopeptine + 2-oxoglutarate + O2 = (Z)-4'-methoxydehydrocyclopeptine + succinate + CO2 + H2O</text>
        <dbReference type="Rhea" id="RHEA:74471"/>
        <dbReference type="ChEBI" id="CHEBI:15377"/>
        <dbReference type="ChEBI" id="CHEBI:15379"/>
        <dbReference type="ChEBI" id="CHEBI:16526"/>
        <dbReference type="ChEBI" id="CHEBI:16810"/>
        <dbReference type="ChEBI" id="CHEBI:30031"/>
        <dbReference type="ChEBI" id="CHEBI:193537"/>
        <dbReference type="ChEBI" id="CHEBI:193538"/>
        <dbReference type="EC" id="1.14.11.81"/>
    </reaction>
    <physiologicalReaction direction="left-to-right" evidence="3 4">
        <dbReference type="Rhea" id="RHEA:74472"/>
    </physiologicalReaction>
</comment>
<comment type="catalytic activity">
    <reaction evidence="3 4">
        <text>(Z)-4'-methoxydehydrocyclopeptine + 2-oxoglutarate + O2 = (-)-4'-methoxycyclopenine + succinate + CO2</text>
        <dbReference type="Rhea" id="RHEA:74475"/>
        <dbReference type="ChEBI" id="CHEBI:15379"/>
        <dbReference type="ChEBI" id="CHEBI:16526"/>
        <dbReference type="ChEBI" id="CHEBI:16810"/>
        <dbReference type="ChEBI" id="CHEBI:30031"/>
        <dbReference type="ChEBI" id="CHEBI:193535"/>
        <dbReference type="ChEBI" id="CHEBI:193538"/>
        <dbReference type="EC" id="1.14.11.81"/>
    </reaction>
    <physiologicalReaction direction="left-to-right" evidence="3 4">
        <dbReference type="Rhea" id="RHEA:74476"/>
    </physiologicalReaction>
</comment>
<comment type="catalytic activity">
    <reaction evidence="3">
        <text>(-)-cyclopeptine + 2-oxoglutarate + O2 = (Z)-dehydrocyclopeptine + succinate + CO2 + H2O</text>
        <dbReference type="Rhea" id="RHEA:74479"/>
        <dbReference type="ChEBI" id="CHEBI:15377"/>
        <dbReference type="ChEBI" id="CHEBI:15379"/>
        <dbReference type="ChEBI" id="CHEBI:16526"/>
        <dbReference type="ChEBI" id="CHEBI:16810"/>
        <dbReference type="ChEBI" id="CHEBI:30031"/>
        <dbReference type="ChEBI" id="CHEBI:71330"/>
        <dbReference type="ChEBI" id="CHEBI:71333"/>
        <dbReference type="EC" id="1.14.11.81"/>
    </reaction>
    <physiologicalReaction direction="left-to-right" evidence="3">
        <dbReference type="Rhea" id="RHEA:74480"/>
    </physiologicalReaction>
</comment>
<comment type="catalytic activity">
    <reaction evidence="3">
        <text>(Z)-dehydrocyclopeptine + 2-oxoglutarate + O2 = (-)-cyclopenine + succinate + CO2</text>
        <dbReference type="Rhea" id="RHEA:74483"/>
        <dbReference type="ChEBI" id="CHEBI:15379"/>
        <dbReference type="ChEBI" id="CHEBI:16526"/>
        <dbReference type="ChEBI" id="CHEBI:16810"/>
        <dbReference type="ChEBI" id="CHEBI:30031"/>
        <dbReference type="ChEBI" id="CHEBI:71330"/>
        <dbReference type="ChEBI" id="CHEBI:193522"/>
        <dbReference type="EC" id="1.14.11.81"/>
    </reaction>
    <physiologicalReaction direction="right-to-left" evidence="3">
        <dbReference type="Rhea" id="RHEA:74485"/>
    </physiologicalReaction>
</comment>
<comment type="cofactor">
    <cofactor evidence="4">
        <name>Fe cation</name>
        <dbReference type="ChEBI" id="CHEBI:24875"/>
    </cofactor>
</comment>
<comment type="pathway">
    <text evidence="3 4">Secondary metabolite biosynthesis.</text>
</comment>
<comment type="pathway">
    <text evidence="3 4">Alkaloid biosynthesis.</text>
</comment>
<comment type="pathway">
    <text evidence="3 4">Mycotoxin biosynthesis.</text>
</comment>
<comment type="subunit">
    <text evidence="1">Homodimer.</text>
</comment>
<comment type="similarity">
    <text evidence="6">Belongs to the PhyH family.</text>
</comment>